<name>RS11_CALS4</name>
<protein>
    <recommendedName>
        <fullName evidence="1">Small ribosomal subunit protein uS11</fullName>
    </recommendedName>
    <alternativeName>
        <fullName evidence="2">30S ribosomal protein S11</fullName>
    </alternativeName>
</protein>
<sequence length="130" mass="13907">MAKRVKRAGRKREKKHVERGIAHIHSTFNNTIVTITDPAGNTIAWASAGTVGFKGSRKSTPFAAQMAAESAAKAAMDHGMRTVDVYVKGPGAGREAAIRALQAAGLEVSLIKDVTPIPHNGCRPPKRRRV</sequence>
<dbReference type="EMBL" id="AE008691">
    <property type="protein sequence ID" value="AAM25409.1"/>
    <property type="molecule type" value="Genomic_DNA"/>
</dbReference>
<dbReference type="RefSeq" id="WP_011026312.1">
    <property type="nucleotide sequence ID" value="NZ_JANUCV010000001.1"/>
</dbReference>
<dbReference type="SMR" id="Q8R7Y0"/>
<dbReference type="STRING" id="273068.TTE2265"/>
<dbReference type="KEGG" id="tte:TTE2265"/>
<dbReference type="eggNOG" id="COG0100">
    <property type="taxonomic scope" value="Bacteria"/>
</dbReference>
<dbReference type="HOGENOM" id="CLU_072439_5_0_9"/>
<dbReference type="OrthoDB" id="9806415at2"/>
<dbReference type="Proteomes" id="UP000000555">
    <property type="component" value="Chromosome"/>
</dbReference>
<dbReference type="GO" id="GO:1990904">
    <property type="term" value="C:ribonucleoprotein complex"/>
    <property type="evidence" value="ECO:0007669"/>
    <property type="project" value="UniProtKB-KW"/>
</dbReference>
<dbReference type="GO" id="GO:0005840">
    <property type="term" value="C:ribosome"/>
    <property type="evidence" value="ECO:0007669"/>
    <property type="project" value="UniProtKB-KW"/>
</dbReference>
<dbReference type="GO" id="GO:0019843">
    <property type="term" value="F:rRNA binding"/>
    <property type="evidence" value="ECO:0007669"/>
    <property type="project" value="UniProtKB-UniRule"/>
</dbReference>
<dbReference type="GO" id="GO:0003735">
    <property type="term" value="F:structural constituent of ribosome"/>
    <property type="evidence" value="ECO:0007669"/>
    <property type="project" value="InterPro"/>
</dbReference>
<dbReference type="GO" id="GO:0006412">
    <property type="term" value="P:translation"/>
    <property type="evidence" value="ECO:0007669"/>
    <property type="project" value="UniProtKB-UniRule"/>
</dbReference>
<dbReference type="FunFam" id="3.30.420.80:FF:000001">
    <property type="entry name" value="30S ribosomal protein S11"/>
    <property type="match status" value="1"/>
</dbReference>
<dbReference type="Gene3D" id="3.30.420.80">
    <property type="entry name" value="Ribosomal protein S11"/>
    <property type="match status" value="1"/>
</dbReference>
<dbReference type="HAMAP" id="MF_01310">
    <property type="entry name" value="Ribosomal_uS11"/>
    <property type="match status" value="1"/>
</dbReference>
<dbReference type="InterPro" id="IPR001971">
    <property type="entry name" value="Ribosomal_uS11"/>
</dbReference>
<dbReference type="InterPro" id="IPR019981">
    <property type="entry name" value="Ribosomal_uS11_bac-type"/>
</dbReference>
<dbReference type="InterPro" id="IPR018102">
    <property type="entry name" value="Ribosomal_uS11_CS"/>
</dbReference>
<dbReference type="InterPro" id="IPR036967">
    <property type="entry name" value="Ribosomal_uS11_sf"/>
</dbReference>
<dbReference type="NCBIfam" id="NF003698">
    <property type="entry name" value="PRK05309.1"/>
    <property type="match status" value="1"/>
</dbReference>
<dbReference type="NCBIfam" id="TIGR03632">
    <property type="entry name" value="uS11_bact"/>
    <property type="match status" value="1"/>
</dbReference>
<dbReference type="PANTHER" id="PTHR11759">
    <property type="entry name" value="40S RIBOSOMAL PROTEIN S14/30S RIBOSOMAL PROTEIN S11"/>
    <property type="match status" value="1"/>
</dbReference>
<dbReference type="Pfam" id="PF00411">
    <property type="entry name" value="Ribosomal_S11"/>
    <property type="match status" value="1"/>
</dbReference>
<dbReference type="PIRSF" id="PIRSF002131">
    <property type="entry name" value="Ribosomal_S11"/>
    <property type="match status" value="1"/>
</dbReference>
<dbReference type="SUPFAM" id="SSF53137">
    <property type="entry name" value="Translational machinery components"/>
    <property type="match status" value="1"/>
</dbReference>
<dbReference type="PROSITE" id="PS00054">
    <property type="entry name" value="RIBOSOMAL_S11"/>
    <property type="match status" value="1"/>
</dbReference>
<accession>Q8R7Y0</accession>
<reference key="1">
    <citation type="journal article" date="2002" name="Genome Res.">
        <title>A complete sequence of the T. tengcongensis genome.</title>
        <authorList>
            <person name="Bao Q."/>
            <person name="Tian Y."/>
            <person name="Li W."/>
            <person name="Xu Z."/>
            <person name="Xuan Z."/>
            <person name="Hu S."/>
            <person name="Dong W."/>
            <person name="Yang J."/>
            <person name="Chen Y."/>
            <person name="Xue Y."/>
            <person name="Xu Y."/>
            <person name="Lai X."/>
            <person name="Huang L."/>
            <person name="Dong X."/>
            <person name="Ma Y."/>
            <person name="Ling L."/>
            <person name="Tan H."/>
            <person name="Chen R."/>
            <person name="Wang J."/>
            <person name="Yu J."/>
            <person name="Yang H."/>
        </authorList>
    </citation>
    <scope>NUCLEOTIDE SEQUENCE [LARGE SCALE GENOMIC DNA]</scope>
    <source>
        <strain>DSM 15242 / JCM 11007 / NBRC 100824 / MB4</strain>
    </source>
</reference>
<keyword id="KW-1185">Reference proteome</keyword>
<keyword id="KW-0687">Ribonucleoprotein</keyword>
<keyword id="KW-0689">Ribosomal protein</keyword>
<keyword id="KW-0694">RNA-binding</keyword>
<keyword id="KW-0699">rRNA-binding</keyword>
<proteinExistence type="inferred from homology"/>
<feature type="chain" id="PRO_0000123247" description="Small ribosomal subunit protein uS11">
    <location>
        <begin position="1"/>
        <end position="130"/>
    </location>
</feature>
<gene>
    <name evidence="1" type="primary">rpsK</name>
    <name type="ordered locus">TTE2265</name>
</gene>
<organism>
    <name type="scientific">Caldanaerobacter subterraneus subsp. tengcongensis (strain DSM 15242 / JCM 11007 / NBRC 100824 / MB4)</name>
    <name type="common">Thermoanaerobacter tengcongensis</name>
    <dbReference type="NCBI Taxonomy" id="273068"/>
    <lineage>
        <taxon>Bacteria</taxon>
        <taxon>Bacillati</taxon>
        <taxon>Bacillota</taxon>
        <taxon>Clostridia</taxon>
        <taxon>Thermoanaerobacterales</taxon>
        <taxon>Thermoanaerobacteraceae</taxon>
        <taxon>Caldanaerobacter</taxon>
    </lineage>
</organism>
<evidence type="ECO:0000255" key="1">
    <source>
        <dbReference type="HAMAP-Rule" id="MF_01310"/>
    </source>
</evidence>
<evidence type="ECO:0000305" key="2"/>
<comment type="function">
    <text evidence="1">Located on the platform of the 30S subunit, it bridges several disparate RNA helices of the 16S rRNA. Forms part of the Shine-Dalgarno cleft in the 70S ribosome.</text>
</comment>
<comment type="subunit">
    <text evidence="1">Part of the 30S ribosomal subunit. Interacts with proteins S7 and S18. Binds to IF-3.</text>
</comment>
<comment type="similarity">
    <text evidence="1">Belongs to the universal ribosomal protein uS11 family.</text>
</comment>